<evidence type="ECO:0000255" key="1">
    <source>
        <dbReference type="HAMAP-Rule" id="MF_01507"/>
    </source>
</evidence>
<accession>B7HQE5</accession>
<proteinExistence type="inferred from homology"/>
<organism>
    <name type="scientific">Bacillus cereus (strain AH187)</name>
    <dbReference type="NCBI Taxonomy" id="405534"/>
    <lineage>
        <taxon>Bacteria</taxon>
        <taxon>Bacillati</taxon>
        <taxon>Bacillota</taxon>
        <taxon>Bacilli</taxon>
        <taxon>Bacillales</taxon>
        <taxon>Bacillaceae</taxon>
        <taxon>Bacillus</taxon>
        <taxon>Bacillus cereus group</taxon>
    </lineage>
</organism>
<sequence>MDGFDKTMKFSIQDEKQSVHVNDVLLTVYDALQEKGYNPINQIVGYLLSGDPAYIPRHKDARSIIRKLERDELIEELVKSYLKHHREE</sequence>
<dbReference type="EMBL" id="CP001177">
    <property type="protein sequence ID" value="ACJ80775.1"/>
    <property type="molecule type" value="Genomic_DNA"/>
</dbReference>
<dbReference type="SMR" id="B7HQE5"/>
<dbReference type="KEGG" id="bcr:BCAH187_A4520"/>
<dbReference type="HOGENOM" id="CLU_162466_0_0_9"/>
<dbReference type="Proteomes" id="UP000002214">
    <property type="component" value="Chromosome"/>
</dbReference>
<dbReference type="HAMAP" id="MF_01507">
    <property type="entry name" value="UPF0297"/>
    <property type="match status" value="1"/>
</dbReference>
<dbReference type="InterPro" id="IPR009309">
    <property type="entry name" value="IreB"/>
</dbReference>
<dbReference type="NCBIfam" id="NF003997">
    <property type="entry name" value="PRK05473.1"/>
    <property type="match status" value="1"/>
</dbReference>
<dbReference type="PANTHER" id="PTHR40067">
    <property type="entry name" value="UPF0297 PROTEIN YRZL"/>
    <property type="match status" value="1"/>
</dbReference>
<dbReference type="PANTHER" id="PTHR40067:SF1">
    <property type="entry name" value="UPF0297 PROTEIN YRZL"/>
    <property type="match status" value="1"/>
</dbReference>
<dbReference type="Pfam" id="PF06135">
    <property type="entry name" value="IreB"/>
    <property type="match status" value="1"/>
</dbReference>
<dbReference type="PIRSF" id="PIRSF037258">
    <property type="entry name" value="DUF965_bac"/>
    <property type="match status" value="1"/>
</dbReference>
<name>Y4520_BACC7</name>
<comment type="similarity">
    <text evidence="1">Belongs to the UPF0297 family.</text>
</comment>
<gene>
    <name type="ordered locus">BCAH187_A4520</name>
</gene>
<reference key="1">
    <citation type="submission" date="2008-10" db="EMBL/GenBank/DDBJ databases">
        <title>Genome sequence of Bacillus cereus AH187.</title>
        <authorList>
            <person name="Dodson R.J."/>
            <person name="Durkin A.S."/>
            <person name="Rosovitz M.J."/>
            <person name="Rasko D.A."/>
            <person name="Kolsto A.B."/>
            <person name="Okstad O.A."/>
            <person name="Ravel J."/>
            <person name="Sutton G."/>
        </authorList>
    </citation>
    <scope>NUCLEOTIDE SEQUENCE [LARGE SCALE GENOMIC DNA]</scope>
    <source>
        <strain>AH187</strain>
    </source>
</reference>
<feature type="chain" id="PRO_1000198226" description="UPF0297 protein BCAH187_A4520">
    <location>
        <begin position="1"/>
        <end position="88"/>
    </location>
</feature>
<protein>
    <recommendedName>
        <fullName evidence="1">UPF0297 protein BCAH187_A4520</fullName>
    </recommendedName>
</protein>